<organism>
    <name type="scientific">Pseudomonas protegens (strain DSM 19095 / LMG 27888 / CFBP 6595 / CHA0)</name>
    <dbReference type="NCBI Taxonomy" id="1124983"/>
    <lineage>
        <taxon>Bacteria</taxon>
        <taxon>Pseudomonadati</taxon>
        <taxon>Pseudomonadota</taxon>
        <taxon>Gammaproteobacteria</taxon>
        <taxon>Pseudomonadales</taxon>
        <taxon>Pseudomonadaceae</taxon>
        <taxon>Pseudomonas</taxon>
    </lineage>
</organism>
<keyword id="KW-0884">PQQ biosynthesis</keyword>
<keyword id="KW-0813">Transport</keyword>
<feature type="chain" id="PRO_0000220004" description="Coenzyme PQQ synthesis protein B">
    <location>
        <begin position="1"/>
        <end position="303"/>
    </location>
</feature>
<name>PQQB_PSEPH</name>
<reference key="1">
    <citation type="journal article" date="1995" name="Appl. Environ. Microbiol.">
        <title>Tn5-directed cloning of pqq genes from Pseudomonas fluorescens CHA0: mutational inactivation of the genes results in overproduction of the antibiotic pyoluteorin.</title>
        <authorList>
            <person name="Schnider U."/>
            <person name="Keel C."/>
            <person name="Defago G."/>
            <person name="Haas D."/>
        </authorList>
    </citation>
    <scope>NUCLEOTIDE SEQUENCE [GENOMIC DNA]</scope>
    <source>
        <strain>DSM 19095 / LMG 27888 / CFBP 6595 / CHA0</strain>
    </source>
</reference>
<dbReference type="EMBL" id="X87299">
    <property type="protein sequence ID" value="CAA60733.1"/>
    <property type="molecule type" value="Genomic_DNA"/>
</dbReference>
<dbReference type="PIR" id="S58243">
    <property type="entry name" value="S58243"/>
</dbReference>
<dbReference type="RefSeq" id="WP_011063849.1">
    <property type="nucleotide sequence ID" value="NZ_LS999205.1"/>
</dbReference>
<dbReference type="SMR" id="P55172"/>
<dbReference type="GeneID" id="57478624"/>
<dbReference type="PATRIC" id="fig|1124983.3.peg.5651"/>
<dbReference type="eggNOG" id="COG1235">
    <property type="taxonomic scope" value="Bacteria"/>
</dbReference>
<dbReference type="UniPathway" id="UPA00539"/>
<dbReference type="GO" id="GO:0018189">
    <property type="term" value="P:pyrroloquinoline quinone biosynthetic process"/>
    <property type="evidence" value="ECO:0007669"/>
    <property type="project" value="UniProtKB-UniRule"/>
</dbReference>
<dbReference type="CDD" id="cd16274">
    <property type="entry name" value="PQQB-like_MBL-fold"/>
    <property type="match status" value="1"/>
</dbReference>
<dbReference type="Gene3D" id="3.60.15.10">
    <property type="entry name" value="Ribonuclease Z/Hydroxyacylglutathione hydrolase-like"/>
    <property type="match status" value="1"/>
</dbReference>
<dbReference type="HAMAP" id="MF_00653">
    <property type="entry name" value="PQQ_syn_PqqB"/>
    <property type="match status" value="1"/>
</dbReference>
<dbReference type="InterPro" id="IPR001279">
    <property type="entry name" value="Metallo-B-lactamas"/>
</dbReference>
<dbReference type="InterPro" id="IPR011842">
    <property type="entry name" value="PQQ_synth_PqqB"/>
</dbReference>
<dbReference type="InterPro" id="IPR036866">
    <property type="entry name" value="RibonucZ/Hydroxyglut_hydro"/>
</dbReference>
<dbReference type="NCBIfam" id="TIGR02108">
    <property type="entry name" value="PQQ_syn_pqqB"/>
    <property type="match status" value="1"/>
</dbReference>
<dbReference type="PANTHER" id="PTHR42663:SF7">
    <property type="entry name" value="COENZYME PQQ SYNTHESIS PROTEIN B"/>
    <property type="match status" value="1"/>
</dbReference>
<dbReference type="PANTHER" id="PTHR42663">
    <property type="entry name" value="HYDROLASE C777.06C-RELATED-RELATED"/>
    <property type="match status" value="1"/>
</dbReference>
<dbReference type="Pfam" id="PF12706">
    <property type="entry name" value="Lactamase_B_2"/>
    <property type="match status" value="1"/>
</dbReference>
<dbReference type="SUPFAM" id="SSF56281">
    <property type="entry name" value="Metallo-hydrolase/oxidoreductase"/>
    <property type="match status" value="1"/>
</dbReference>
<sequence>MFVQILGSAAGGGFPQWNCNCVNCAGFRDGSLRAQARTQSSIAISDDGVNWVLCNASPDIRAQLQSFAPMQPGRALRDTGIGAIILMDSQIDHTTGLLSLREGCPHQVWCTDMVHEDLSTGFPLFKMLSHWNGGLSWNRIELDQSFSIPACPNLRFTPLPLRSAAPPYSPHRFDPHPGDNIGLIVEDLRSGGKLFYAPGLGKVDAPLLEIMAASDVLLVDGTLWEDDEMQRRGVGTRTGREMGHLAQNGPGGMLEVLEQLPRQRKVLIHINNTNPILDEDSAERAELVRRKVEVAYDGMSIEL</sequence>
<accession>P55172</accession>
<comment type="function">
    <text evidence="1">May be involved in the transport of PQQ or its precursor to the periplasm.</text>
</comment>
<comment type="pathway">
    <text>Cofactor biosynthesis; pyrroloquinoline quinone biosynthesis.</text>
</comment>
<comment type="similarity">
    <text evidence="2">Belongs to the PqqB family.</text>
</comment>
<proteinExistence type="inferred from homology"/>
<evidence type="ECO:0000250" key="1"/>
<evidence type="ECO:0000305" key="2"/>
<protein>
    <recommendedName>
        <fullName>Coenzyme PQQ synthesis protein B</fullName>
    </recommendedName>
    <alternativeName>
        <fullName>Pyrroloquinoline quinone biosynthesis protein B</fullName>
    </alternativeName>
</protein>
<gene>
    <name type="primary">pqqB</name>
</gene>